<comment type="function">
    <text evidence="1">Condenses 4-methyl-5-(beta-hydroxyethyl)thiazole monophosphate (THZ-P) and 2-methyl-4-amino-5-hydroxymethyl pyrimidine pyrophosphate (HMP-PP) to form thiamine monophosphate (TMP).</text>
</comment>
<comment type="catalytic activity">
    <reaction evidence="1">
        <text>2-[(2R,5Z)-2-carboxy-4-methylthiazol-5(2H)-ylidene]ethyl phosphate + 4-amino-2-methyl-5-(diphosphooxymethyl)pyrimidine + 2 H(+) = thiamine phosphate + CO2 + diphosphate</text>
        <dbReference type="Rhea" id="RHEA:47844"/>
        <dbReference type="ChEBI" id="CHEBI:15378"/>
        <dbReference type="ChEBI" id="CHEBI:16526"/>
        <dbReference type="ChEBI" id="CHEBI:33019"/>
        <dbReference type="ChEBI" id="CHEBI:37575"/>
        <dbReference type="ChEBI" id="CHEBI:57841"/>
        <dbReference type="ChEBI" id="CHEBI:62899"/>
        <dbReference type="EC" id="2.5.1.3"/>
    </reaction>
</comment>
<comment type="catalytic activity">
    <reaction evidence="1">
        <text>2-(2-carboxy-4-methylthiazol-5-yl)ethyl phosphate + 4-amino-2-methyl-5-(diphosphooxymethyl)pyrimidine + 2 H(+) = thiamine phosphate + CO2 + diphosphate</text>
        <dbReference type="Rhea" id="RHEA:47848"/>
        <dbReference type="ChEBI" id="CHEBI:15378"/>
        <dbReference type="ChEBI" id="CHEBI:16526"/>
        <dbReference type="ChEBI" id="CHEBI:33019"/>
        <dbReference type="ChEBI" id="CHEBI:37575"/>
        <dbReference type="ChEBI" id="CHEBI:57841"/>
        <dbReference type="ChEBI" id="CHEBI:62890"/>
        <dbReference type="EC" id="2.5.1.3"/>
    </reaction>
</comment>
<comment type="catalytic activity">
    <reaction evidence="1">
        <text>4-methyl-5-(2-phosphooxyethyl)-thiazole + 4-amino-2-methyl-5-(diphosphooxymethyl)pyrimidine + H(+) = thiamine phosphate + diphosphate</text>
        <dbReference type="Rhea" id="RHEA:22328"/>
        <dbReference type="ChEBI" id="CHEBI:15378"/>
        <dbReference type="ChEBI" id="CHEBI:33019"/>
        <dbReference type="ChEBI" id="CHEBI:37575"/>
        <dbReference type="ChEBI" id="CHEBI:57841"/>
        <dbReference type="ChEBI" id="CHEBI:58296"/>
        <dbReference type="EC" id="2.5.1.3"/>
    </reaction>
</comment>
<comment type="cofactor">
    <cofactor evidence="1">
        <name>Mg(2+)</name>
        <dbReference type="ChEBI" id="CHEBI:18420"/>
    </cofactor>
    <text evidence="1">Binds 1 Mg(2+) ion per subunit.</text>
</comment>
<comment type="pathway">
    <text evidence="1">Cofactor biosynthesis; thiamine diphosphate biosynthesis; thiamine phosphate from 4-amino-2-methyl-5-diphosphomethylpyrimidine and 4-methyl-5-(2-phosphoethyl)-thiazole: step 1/1.</text>
</comment>
<comment type="similarity">
    <text evidence="1">Belongs to the thiamine-phosphate synthase family.</text>
</comment>
<accession>Q02YS6</accession>
<sequence length="218" mass="23610">MTNKTLDLSVYFIAGAQNFSECSLDGATQKIALIIKSGVTVYQFRDKGTIYKEQKQRLSIAQKLQKVSEEAGVSFIVNDDVELARELNADGIHIGQTDESVSKVREKVGQEMWLGLSVTKADELKTAQSSGADYLGIGPIYPTNSKNDAAKPIGIKDLRLMLLENQLPIVGIGGITQDSLTELSAIGLDGLAVISLLTEAENPKKVAQMIRQKITKNG</sequence>
<reference key="1">
    <citation type="journal article" date="2006" name="Proc. Natl. Acad. Sci. U.S.A.">
        <title>Comparative genomics of the lactic acid bacteria.</title>
        <authorList>
            <person name="Makarova K.S."/>
            <person name="Slesarev A."/>
            <person name="Wolf Y.I."/>
            <person name="Sorokin A."/>
            <person name="Mirkin B."/>
            <person name="Koonin E.V."/>
            <person name="Pavlov A."/>
            <person name="Pavlova N."/>
            <person name="Karamychev V."/>
            <person name="Polouchine N."/>
            <person name="Shakhova V."/>
            <person name="Grigoriev I."/>
            <person name="Lou Y."/>
            <person name="Rohksar D."/>
            <person name="Lucas S."/>
            <person name="Huang K."/>
            <person name="Goodstein D.M."/>
            <person name="Hawkins T."/>
            <person name="Plengvidhya V."/>
            <person name="Welker D."/>
            <person name="Hughes J."/>
            <person name="Goh Y."/>
            <person name="Benson A."/>
            <person name="Baldwin K."/>
            <person name="Lee J.-H."/>
            <person name="Diaz-Muniz I."/>
            <person name="Dosti B."/>
            <person name="Smeianov V."/>
            <person name="Wechter W."/>
            <person name="Barabote R."/>
            <person name="Lorca G."/>
            <person name="Altermann E."/>
            <person name="Barrangou R."/>
            <person name="Ganesan B."/>
            <person name="Xie Y."/>
            <person name="Rawsthorne H."/>
            <person name="Tamir D."/>
            <person name="Parker C."/>
            <person name="Breidt F."/>
            <person name="Broadbent J.R."/>
            <person name="Hutkins R."/>
            <person name="O'Sullivan D."/>
            <person name="Steele J."/>
            <person name="Unlu G."/>
            <person name="Saier M.H. Jr."/>
            <person name="Klaenhammer T."/>
            <person name="Richardson P."/>
            <person name="Kozyavkin S."/>
            <person name="Weimer B.C."/>
            <person name="Mills D.A."/>
        </authorList>
    </citation>
    <scope>NUCLEOTIDE SEQUENCE [LARGE SCALE GENOMIC DNA]</scope>
    <source>
        <strain>SK11</strain>
    </source>
</reference>
<organism>
    <name type="scientific">Lactococcus lactis subsp. cremoris (strain SK11)</name>
    <dbReference type="NCBI Taxonomy" id="272622"/>
    <lineage>
        <taxon>Bacteria</taxon>
        <taxon>Bacillati</taxon>
        <taxon>Bacillota</taxon>
        <taxon>Bacilli</taxon>
        <taxon>Lactobacillales</taxon>
        <taxon>Streptococcaceae</taxon>
        <taxon>Lactococcus</taxon>
        <taxon>Lactococcus cremoris subsp. cremoris</taxon>
    </lineage>
</organism>
<dbReference type="EC" id="2.5.1.3" evidence="1"/>
<dbReference type="EMBL" id="CP000425">
    <property type="protein sequence ID" value="ABJ72896.1"/>
    <property type="molecule type" value="Genomic_DNA"/>
</dbReference>
<dbReference type="RefSeq" id="WP_011676187.1">
    <property type="nucleotide sequence ID" value="NC_008527.1"/>
</dbReference>
<dbReference type="SMR" id="Q02YS6"/>
<dbReference type="KEGG" id="llc:LACR_1375"/>
<dbReference type="HOGENOM" id="CLU_018272_3_2_9"/>
<dbReference type="UniPathway" id="UPA00060">
    <property type="reaction ID" value="UER00141"/>
</dbReference>
<dbReference type="Proteomes" id="UP000000240">
    <property type="component" value="Chromosome"/>
</dbReference>
<dbReference type="GO" id="GO:0005737">
    <property type="term" value="C:cytoplasm"/>
    <property type="evidence" value="ECO:0007669"/>
    <property type="project" value="TreeGrafter"/>
</dbReference>
<dbReference type="GO" id="GO:0000287">
    <property type="term" value="F:magnesium ion binding"/>
    <property type="evidence" value="ECO:0007669"/>
    <property type="project" value="UniProtKB-UniRule"/>
</dbReference>
<dbReference type="GO" id="GO:0004789">
    <property type="term" value="F:thiamine-phosphate diphosphorylase activity"/>
    <property type="evidence" value="ECO:0007669"/>
    <property type="project" value="UniProtKB-UniRule"/>
</dbReference>
<dbReference type="GO" id="GO:0009228">
    <property type="term" value="P:thiamine biosynthetic process"/>
    <property type="evidence" value="ECO:0007669"/>
    <property type="project" value="UniProtKB-KW"/>
</dbReference>
<dbReference type="GO" id="GO:0009229">
    <property type="term" value="P:thiamine diphosphate biosynthetic process"/>
    <property type="evidence" value="ECO:0007669"/>
    <property type="project" value="UniProtKB-UniRule"/>
</dbReference>
<dbReference type="CDD" id="cd00564">
    <property type="entry name" value="TMP_TenI"/>
    <property type="match status" value="1"/>
</dbReference>
<dbReference type="FunFam" id="3.20.20.70:FF:000096">
    <property type="entry name" value="Thiamine-phosphate synthase"/>
    <property type="match status" value="1"/>
</dbReference>
<dbReference type="Gene3D" id="3.20.20.70">
    <property type="entry name" value="Aldolase class I"/>
    <property type="match status" value="1"/>
</dbReference>
<dbReference type="HAMAP" id="MF_00097">
    <property type="entry name" value="TMP_synthase"/>
    <property type="match status" value="1"/>
</dbReference>
<dbReference type="InterPro" id="IPR013785">
    <property type="entry name" value="Aldolase_TIM"/>
</dbReference>
<dbReference type="InterPro" id="IPR036206">
    <property type="entry name" value="ThiamineP_synth_sf"/>
</dbReference>
<dbReference type="InterPro" id="IPR022998">
    <property type="entry name" value="ThiamineP_synth_TenI"/>
</dbReference>
<dbReference type="InterPro" id="IPR034291">
    <property type="entry name" value="TMP_synthase"/>
</dbReference>
<dbReference type="NCBIfam" id="TIGR00693">
    <property type="entry name" value="thiE"/>
    <property type="match status" value="1"/>
</dbReference>
<dbReference type="PANTHER" id="PTHR20857">
    <property type="entry name" value="THIAMINE-PHOSPHATE PYROPHOSPHORYLASE"/>
    <property type="match status" value="1"/>
</dbReference>
<dbReference type="PANTHER" id="PTHR20857:SF15">
    <property type="entry name" value="THIAMINE-PHOSPHATE SYNTHASE"/>
    <property type="match status" value="1"/>
</dbReference>
<dbReference type="Pfam" id="PF02581">
    <property type="entry name" value="TMP-TENI"/>
    <property type="match status" value="1"/>
</dbReference>
<dbReference type="SUPFAM" id="SSF51391">
    <property type="entry name" value="Thiamin phosphate synthase"/>
    <property type="match status" value="1"/>
</dbReference>
<protein>
    <recommendedName>
        <fullName evidence="1">Thiamine-phosphate synthase</fullName>
        <shortName evidence="1">TP synthase</shortName>
        <shortName evidence="1">TPS</shortName>
        <ecNumber evidence="1">2.5.1.3</ecNumber>
    </recommendedName>
    <alternativeName>
        <fullName evidence="1">Thiamine-phosphate pyrophosphorylase</fullName>
        <shortName evidence="1">TMP pyrophosphorylase</shortName>
        <shortName evidence="1">TMP-PPase</shortName>
    </alternativeName>
</protein>
<feature type="chain" id="PRO_1000008147" description="Thiamine-phosphate synthase">
    <location>
        <begin position="1"/>
        <end position="218"/>
    </location>
</feature>
<feature type="binding site" evidence="1">
    <location>
        <begin position="43"/>
        <end position="47"/>
    </location>
    <ligand>
        <name>4-amino-2-methyl-5-(diphosphooxymethyl)pyrimidine</name>
        <dbReference type="ChEBI" id="CHEBI:57841"/>
    </ligand>
</feature>
<feature type="binding site" evidence="1">
    <location>
        <position position="78"/>
    </location>
    <ligand>
        <name>4-amino-2-methyl-5-(diphosphooxymethyl)pyrimidine</name>
        <dbReference type="ChEBI" id="CHEBI:57841"/>
    </ligand>
</feature>
<feature type="binding site" evidence="1">
    <location>
        <position position="79"/>
    </location>
    <ligand>
        <name>Mg(2+)</name>
        <dbReference type="ChEBI" id="CHEBI:18420"/>
    </ligand>
</feature>
<feature type="binding site" evidence="1">
    <location>
        <position position="98"/>
    </location>
    <ligand>
        <name>Mg(2+)</name>
        <dbReference type="ChEBI" id="CHEBI:18420"/>
    </ligand>
</feature>
<feature type="binding site" evidence="1">
    <location>
        <position position="117"/>
    </location>
    <ligand>
        <name>4-amino-2-methyl-5-(diphosphooxymethyl)pyrimidine</name>
        <dbReference type="ChEBI" id="CHEBI:57841"/>
    </ligand>
</feature>
<feature type="binding site" evidence="1">
    <location>
        <begin position="143"/>
        <end position="145"/>
    </location>
    <ligand>
        <name>2-[(2R,5Z)-2-carboxy-4-methylthiazol-5(2H)-ylidene]ethyl phosphate</name>
        <dbReference type="ChEBI" id="CHEBI:62899"/>
    </ligand>
</feature>
<feature type="binding site" evidence="1">
    <location>
        <position position="146"/>
    </location>
    <ligand>
        <name>4-amino-2-methyl-5-(diphosphooxymethyl)pyrimidine</name>
        <dbReference type="ChEBI" id="CHEBI:57841"/>
    </ligand>
</feature>
<feature type="binding site" evidence="1">
    <location>
        <position position="174"/>
    </location>
    <ligand>
        <name>2-[(2R,5Z)-2-carboxy-4-methylthiazol-5(2H)-ylidene]ethyl phosphate</name>
        <dbReference type="ChEBI" id="CHEBI:62899"/>
    </ligand>
</feature>
<feature type="binding site" evidence="1">
    <location>
        <begin position="194"/>
        <end position="195"/>
    </location>
    <ligand>
        <name>2-[(2R,5Z)-2-carboxy-4-methylthiazol-5(2H)-ylidene]ethyl phosphate</name>
        <dbReference type="ChEBI" id="CHEBI:62899"/>
    </ligand>
</feature>
<gene>
    <name evidence="1" type="primary">thiE</name>
    <name type="ordered locus">LACR_1375</name>
</gene>
<evidence type="ECO:0000255" key="1">
    <source>
        <dbReference type="HAMAP-Rule" id="MF_00097"/>
    </source>
</evidence>
<proteinExistence type="inferred from homology"/>
<keyword id="KW-0460">Magnesium</keyword>
<keyword id="KW-0479">Metal-binding</keyword>
<keyword id="KW-0784">Thiamine biosynthesis</keyword>
<keyword id="KW-0808">Transferase</keyword>
<name>THIE_LACLS</name>